<sequence length="285" mass="32394">MRLIIVSGRSGSGKSTALNVLEDNGFYCIDNLPAGLLPELAERALLHTELLHPQVAVSIDARNLPSQLKRFPELLEEVRARHIQCDVLYLDADDETLLKRFSETRRRHPLTNESRSLAEAIRDEELLLAAIIDHADLKIDTTHLNLYQLRDMLKLRLLNKPEPGTAFLIESFGFKRGMPVDADLVFDVRCLPNPYWKAELRDFSGLDQPVIDYLAAQPDVEEMFQDIHAYLNKWLPRFAASNRAYVTIAIGCTGGHHRSVYLAERLGLALKEPLKNLQVRHRDLA</sequence>
<proteinExistence type="inferred from homology"/>
<name>Y1028_STUS1</name>
<protein>
    <recommendedName>
        <fullName evidence="1">Nucleotide-binding protein PST_1028</fullName>
    </recommendedName>
</protein>
<reference key="1">
    <citation type="journal article" date="2008" name="Proc. Natl. Acad. Sci. U.S.A.">
        <title>Nitrogen fixation island and rhizosphere competence traits in the genome of root-associated Pseudomonas stutzeri A1501.</title>
        <authorList>
            <person name="Yan Y."/>
            <person name="Yang J."/>
            <person name="Dou Y."/>
            <person name="Chen M."/>
            <person name="Ping S."/>
            <person name="Peng J."/>
            <person name="Lu W."/>
            <person name="Zhang W."/>
            <person name="Yao Z."/>
            <person name="Li H."/>
            <person name="Liu W."/>
            <person name="He S."/>
            <person name="Geng L."/>
            <person name="Zhang X."/>
            <person name="Yang F."/>
            <person name="Yu H."/>
            <person name="Zhan Y."/>
            <person name="Li D."/>
            <person name="Lin Z."/>
            <person name="Wang Y."/>
            <person name="Elmerich C."/>
            <person name="Lin M."/>
            <person name="Jin Q."/>
        </authorList>
    </citation>
    <scope>NUCLEOTIDE SEQUENCE [LARGE SCALE GENOMIC DNA]</scope>
    <source>
        <strain>A1501</strain>
    </source>
</reference>
<gene>
    <name type="ordered locus">PST_1028</name>
</gene>
<feature type="chain" id="PRO_1000056846" description="Nucleotide-binding protein PST_1028">
    <location>
        <begin position="1"/>
        <end position="285"/>
    </location>
</feature>
<feature type="binding site" evidence="1">
    <location>
        <begin position="8"/>
        <end position="15"/>
    </location>
    <ligand>
        <name>ATP</name>
        <dbReference type="ChEBI" id="CHEBI:30616"/>
    </ligand>
</feature>
<feature type="binding site" evidence="1">
    <location>
        <begin position="60"/>
        <end position="63"/>
    </location>
    <ligand>
        <name>GTP</name>
        <dbReference type="ChEBI" id="CHEBI:37565"/>
    </ligand>
</feature>
<keyword id="KW-0067">ATP-binding</keyword>
<keyword id="KW-0342">GTP-binding</keyword>
<keyword id="KW-0547">Nucleotide-binding</keyword>
<keyword id="KW-1185">Reference proteome</keyword>
<dbReference type="EMBL" id="CP000304">
    <property type="protein sequence ID" value="ABP78725.1"/>
    <property type="molecule type" value="Genomic_DNA"/>
</dbReference>
<dbReference type="RefSeq" id="WP_011912216.1">
    <property type="nucleotide sequence ID" value="NC_009434.1"/>
</dbReference>
<dbReference type="SMR" id="A4VIC4"/>
<dbReference type="KEGG" id="psa:PST_1028"/>
<dbReference type="eggNOG" id="COG1660">
    <property type="taxonomic scope" value="Bacteria"/>
</dbReference>
<dbReference type="HOGENOM" id="CLU_059558_1_1_6"/>
<dbReference type="Proteomes" id="UP000000233">
    <property type="component" value="Chromosome"/>
</dbReference>
<dbReference type="GO" id="GO:0005524">
    <property type="term" value="F:ATP binding"/>
    <property type="evidence" value="ECO:0007669"/>
    <property type="project" value="UniProtKB-UniRule"/>
</dbReference>
<dbReference type="GO" id="GO:0005525">
    <property type="term" value="F:GTP binding"/>
    <property type="evidence" value="ECO:0007669"/>
    <property type="project" value="UniProtKB-UniRule"/>
</dbReference>
<dbReference type="Gene3D" id="3.40.50.300">
    <property type="entry name" value="P-loop containing nucleotide triphosphate hydrolases"/>
    <property type="match status" value="1"/>
</dbReference>
<dbReference type="HAMAP" id="MF_00636">
    <property type="entry name" value="RapZ_like"/>
    <property type="match status" value="1"/>
</dbReference>
<dbReference type="InterPro" id="IPR027417">
    <property type="entry name" value="P-loop_NTPase"/>
</dbReference>
<dbReference type="InterPro" id="IPR005337">
    <property type="entry name" value="RapZ-like"/>
</dbReference>
<dbReference type="InterPro" id="IPR053930">
    <property type="entry name" value="RapZ-like_N"/>
</dbReference>
<dbReference type="InterPro" id="IPR053931">
    <property type="entry name" value="RapZ_C"/>
</dbReference>
<dbReference type="NCBIfam" id="NF003828">
    <property type="entry name" value="PRK05416.1"/>
    <property type="match status" value="1"/>
</dbReference>
<dbReference type="PANTHER" id="PTHR30448">
    <property type="entry name" value="RNASE ADAPTER PROTEIN RAPZ"/>
    <property type="match status" value="1"/>
</dbReference>
<dbReference type="PANTHER" id="PTHR30448:SF0">
    <property type="entry name" value="RNASE ADAPTER PROTEIN RAPZ"/>
    <property type="match status" value="1"/>
</dbReference>
<dbReference type="Pfam" id="PF22740">
    <property type="entry name" value="PapZ_C"/>
    <property type="match status" value="1"/>
</dbReference>
<dbReference type="Pfam" id="PF03668">
    <property type="entry name" value="RapZ-like_N"/>
    <property type="match status" value="1"/>
</dbReference>
<dbReference type="PIRSF" id="PIRSF005052">
    <property type="entry name" value="P-loopkin"/>
    <property type="match status" value="1"/>
</dbReference>
<dbReference type="SUPFAM" id="SSF52540">
    <property type="entry name" value="P-loop containing nucleoside triphosphate hydrolases"/>
    <property type="match status" value="1"/>
</dbReference>
<accession>A4VIC4</accession>
<comment type="function">
    <text evidence="1">Displays ATPase and GTPase activities.</text>
</comment>
<comment type="similarity">
    <text evidence="1">Belongs to the RapZ-like family.</text>
</comment>
<organism>
    <name type="scientific">Stutzerimonas stutzeri (strain A1501)</name>
    <name type="common">Pseudomonas stutzeri</name>
    <dbReference type="NCBI Taxonomy" id="379731"/>
    <lineage>
        <taxon>Bacteria</taxon>
        <taxon>Pseudomonadati</taxon>
        <taxon>Pseudomonadota</taxon>
        <taxon>Gammaproteobacteria</taxon>
        <taxon>Pseudomonadales</taxon>
        <taxon>Pseudomonadaceae</taxon>
        <taxon>Stutzerimonas</taxon>
    </lineage>
</organism>
<evidence type="ECO:0000255" key="1">
    <source>
        <dbReference type="HAMAP-Rule" id="MF_00636"/>
    </source>
</evidence>